<sequence length="635" mass="67999">MAKVIGIDLGTTNSCVAVMDGGTPKVIENSEGARTTPSIVAFTKDGERLIGQPAKRQAVTNPDNTIFAVKRLIGRRFDDPMTQKDTELVPYTITKGKNGDAWVKAGGQDYSPSQISAFTLQKMKETAEAYLGETVTQAVITVPAYFNDAQRQATKDAGQIAGLEVLRIINEPTAAALAYGLDKQDGKTIAVYDLGGGTFDISILEIGDGVFEVKSTNGDTFLGGEDFDTAVVEYLADKFKAKEGMDLKTDKLALQRLKEAAEKAKIELSSAQTTEINLPFITARMEGGATTPLHLVETVTRADLEKLVAGLIQRTLDPCKKALADAGISAKEIDDVVLVGGMTRMPKVREVVKDFFGKEPHTGVNPDEVVAMGAAIQAGVLQGDVKDVLLLDVTPLSLGIETLGGIMTKMIDRNTTIPTKKSQVYSTAEDNQQAVTIRVFQGEREMAQDNKLLGQFDLVGIPPARRGVPQIEVTFDIDANGIVNVSAKDKGTGKEQQIRIQASGGLSDADIDQMVRDAEKFAEEDKKRRAAAEAKNNAESLIHATERQLEENGDKVDAGLKAEIEAAIAEAKTAVESGDIDAMNAKAQALTDKAMKMGQAIYEKEQATAASPGAEAPKADDDVVDAEFSEVDENK</sequence>
<dbReference type="EMBL" id="CP000248">
    <property type="protein sequence ID" value="ABD26493.1"/>
    <property type="molecule type" value="Genomic_DNA"/>
</dbReference>
<dbReference type="RefSeq" id="WP_011445702.1">
    <property type="nucleotide sequence ID" value="NC_007794.1"/>
</dbReference>
<dbReference type="SMR" id="Q2G6N0"/>
<dbReference type="STRING" id="279238.Saro_2054"/>
<dbReference type="KEGG" id="nar:Saro_2054"/>
<dbReference type="eggNOG" id="COG0443">
    <property type="taxonomic scope" value="Bacteria"/>
</dbReference>
<dbReference type="HOGENOM" id="CLU_005965_2_1_5"/>
<dbReference type="Proteomes" id="UP000009134">
    <property type="component" value="Chromosome"/>
</dbReference>
<dbReference type="GO" id="GO:0005524">
    <property type="term" value="F:ATP binding"/>
    <property type="evidence" value="ECO:0007669"/>
    <property type="project" value="UniProtKB-UniRule"/>
</dbReference>
<dbReference type="GO" id="GO:0140662">
    <property type="term" value="F:ATP-dependent protein folding chaperone"/>
    <property type="evidence" value="ECO:0007669"/>
    <property type="project" value="InterPro"/>
</dbReference>
<dbReference type="GO" id="GO:0051082">
    <property type="term" value="F:unfolded protein binding"/>
    <property type="evidence" value="ECO:0007669"/>
    <property type="project" value="InterPro"/>
</dbReference>
<dbReference type="FunFam" id="2.60.34.10:FF:000014">
    <property type="entry name" value="Chaperone protein DnaK HSP70"/>
    <property type="match status" value="1"/>
</dbReference>
<dbReference type="FunFam" id="3.30.420.40:FF:000020">
    <property type="entry name" value="Chaperone protein HscA homolog"/>
    <property type="match status" value="1"/>
</dbReference>
<dbReference type="FunFam" id="1.20.1270.10:FF:000001">
    <property type="entry name" value="Molecular chaperone DnaK"/>
    <property type="match status" value="1"/>
</dbReference>
<dbReference type="FunFam" id="3.30.420.40:FF:000004">
    <property type="entry name" value="Molecular chaperone DnaK"/>
    <property type="match status" value="1"/>
</dbReference>
<dbReference type="FunFam" id="3.90.640.10:FF:000003">
    <property type="entry name" value="Molecular chaperone DnaK"/>
    <property type="match status" value="1"/>
</dbReference>
<dbReference type="Gene3D" id="1.20.1270.10">
    <property type="match status" value="1"/>
</dbReference>
<dbReference type="Gene3D" id="3.30.420.40">
    <property type="match status" value="2"/>
</dbReference>
<dbReference type="Gene3D" id="3.90.640.10">
    <property type="entry name" value="Actin, Chain A, domain 4"/>
    <property type="match status" value="1"/>
</dbReference>
<dbReference type="Gene3D" id="2.60.34.10">
    <property type="entry name" value="Substrate Binding Domain Of DNAk, Chain A, domain 1"/>
    <property type="match status" value="1"/>
</dbReference>
<dbReference type="HAMAP" id="MF_00332">
    <property type="entry name" value="DnaK"/>
    <property type="match status" value="1"/>
</dbReference>
<dbReference type="InterPro" id="IPR043129">
    <property type="entry name" value="ATPase_NBD"/>
</dbReference>
<dbReference type="InterPro" id="IPR012725">
    <property type="entry name" value="Chaperone_DnaK"/>
</dbReference>
<dbReference type="InterPro" id="IPR018181">
    <property type="entry name" value="Heat_shock_70_CS"/>
</dbReference>
<dbReference type="InterPro" id="IPR029048">
    <property type="entry name" value="HSP70_C_sf"/>
</dbReference>
<dbReference type="InterPro" id="IPR029047">
    <property type="entry name" value="HSP70_peptide-bd_sf"/>
</dbReference>
<dbReference type="InterPro" id="IPR013126">
    <property type="entry name" value="Hsp_70_fam"/>
</dbReference>
<dbReference type="NCBIfam" id="NF001413">
    <property type="entry name" value="PRK00290.1"/>
    <property type="match status" value="1"/>
</dbReference>
<dbReference type="NCBIfam" id="NF003520">
    <property type="entry name" value="PRK05183.1"/>
    <property type="match status" value="1"/>
</dbReference>
<dbReference type="NCBIfam" id="TIGR02350">
    <property type="entry name" value="prok_dnaK"/>
    <property type="match status" value="1"/>
</dbReference>
<dbReference type="PANTHER" id="PTHR19375">
    <property type="entry name" value="HEAT SHOCK PROTEIN 70KDA"/>
    <property type="match status" value="1"/>
</dbReference>
<dbReference type="Pfam" id="PF00012">
    <property type="entry name" value="HSP70"/>
    <property type="match status" value="1"/>
</dbReference>
<dbReference type="PRINTS" id="PR00301">
    <property type="entry name" value="HEATSHOCK70"/>
</dbReference>
<dbReference type="SUPFAM" id="SSF53067">
    <property type="entry name" value="Actin-like ATPase domain"/>
    <property type="match status" value="2"/>
</dbReference>
<dbReference type="SUPFAM" id="SSF100934">
    <property type="entry name" value="Heat shock protein 70kD (HSP70), C-terminal subdomain"/>
    <property type="match status" value="1"/>
</dbReference>
<dbReference type="SUPFAM" id="SSF100920">
    <property type="entry name" value="Heat shock protein 70kD (HSP70), peptide-binding domain"/>
    <property type="match status" value="1"/>
</dbReference>
<dbReference type="PROSITE" id="PS00297">
    <property type="entry name" value="HSP70_1"/>
    <property type="match status" value="1"/>
</dbReference>
<dbReference type="PROSITE" id="PS00329">
    <property type="entry name" value="HSP70_2"/>
    <property type="match status" value="1"/>
</dbReference>
<dbReference type="PROSITE" id="PS01036">
    <property type="entry name" value="HSP70_3"/>
    <property type="match status" value="1"/>
</dbReference>
<reference key="1">
    <citation type="submission" date="2006-01" db="EMBL/GenBank/DDBJ databases">
        <title>Complete sequence of Novosphingobium aromaticivorans DSM 12444.</title>
        <authorList>
            <consortium name="US DOE Joint Genome Institute"/>
            <person name="Copeland A."/>
            <person name="Lucas S."/>
            <person name="Lapidus A."/>
            <person name="Barry K."/>
            <person name="Detter J.C."/>
            <person name="Glavina T."/>
            <person name="Hammon N."/>
            <person name="Israni S."/>
            <person name="Pitluck S."/>
            <person name="Chain P."/>
            <person name="Malfatti S."/>
            <person name="Shin M."/>
            <person name="Vergez L."/>
            <person name="Schmutz J."/>
            <person name="Larimer F."/>
            <person name="Land M."/>
            <person name="Kyrpides N."/>
            <person name="Ivanova N."/>
            <person name="Fredrickson J."/>
            <person name="Balkwill D."/>
            <person name="Romine M.F."/>
            <person name="Richardson P."/>
        </authorList>
    </citation>
    <scope>NUCLEOTIDE SEQUENCE [LARGE SCALE GENOMIC DNA]</scope>
    <source>
        <strain>ATCC 700278 / DSM 12444 / CCUG 56034 / CIP 105152 / NBRC 16084 / F199</strain>
    </source>
</reference>
<keyword id="KW-0067">ATP-binding</keyword>
<keyword id="KW-0143">Chaperone</keyword>
<keyword id="KW-0547">Nucleotide-binding</keyword>
<keyword id="KW-0597">Phosphoprotein</keyword>
<keyword id="KW-1185">Reference proteome</keyword>
<keyword id="KW-0346">Stress response</keyword>
<proteinExistence type="inferred from homology"/>
<accession>Q2G6N0</accession>
<feature type="chain" id="PRO_1000059621" description="Chaperone protein DnaK">
    <location>
        <begin position="1"/>
        <end position="635"/>
    </location>
</feature>
<feature type="region of interest" description="Disordered" evidence="2">
    <location>
        <begin position="606"/>
        <end position="635"/>
    </location>
</feature>
<feature type="compositionally biased region" description="Acidic residues" evidence="2">
    <location>
        <begin position="622"/>
        <end position="635"/>
    </location>
</feature>
<feature type="modified residue" description="Phosphothreonine; by autocatalysis" evidence="1">
    <location>
        <position position="198"/>
    </location>
</feature>
<organism>
    <name type="scientific">Novosphingobium aromaticivorans (strain ATCC 700278 / DSM 12444 / CCUG 56034 / CIP 105152 / NBRC 16084 / F199)</name>
    <dbReference type="NCBI Taxonomy" id="279238"/>
    <lineage>
        <taxon>Bacteria</taxon>
        <taxon>Pseudomonadati</taxon>
        <taxon>Pseudomonadota</taxon>
        <taxon>Alphaproteobacteria</taxon>
        <taxon>Sphingomonadales</taxon>
        <taxon>Sphingomonadaceae</taxon>
        <taxon>Novosphingobium</taxon>
    </lineage>
</organism>
<comment type="function">
    <text evidence="1">Acts as a chaperone.</text>
</comment>
<comment type="induction">
    <text evidence="1">By stress conditions e.g. heat shock.</text>
</comment>
<comment type="similarity">
    <text evidence="1">Belongs to the heat shock protein 70 family.</text>
</comment>
<name>DNAK_NOVAD</name>
<gene>
    <name evidence="1" type="primary">dnaK</name>
    <name type="ordered locus">Saro_2054</name>
</gene>
<protein>
    <recommendedName>
        <fullName evidence="1">Chaperone protein DnaK</fullName>
    </recommendedName>
    <alternativeName>
        <fullName evidence="1">HSP70</fullName>
    </alternativeName>
    <alternativeName>
        <fullName evidence="1">Heat shock 70 kDa protein</fullName>
    </alternativeName>
    <alternativeName>
        <fullName evidence="1">Heat shock protein 70</fullName>
    </alternativeName>
</protein>
<evidence type="ECO:0000255" key="1">
    <source>
        <dbReference type="HAMAP-Rule" id="MF_00332"/>
    </source>
</evidence>
<evidence type="ECO:0000256" key="2">
    <source>
        <dbReference type="SAM" id="MobiDB-lite"/>
    </source>
</evidence>